<gene>
    <name evidence="1" type="primary">tsf</name>
    <name type="ordered locus">Bind_2224</name>
</gene>
<feature type="chain" id="PRO_1000116693" description="Elongation factor Ts">
    <location>
        <begin position="1"/>
        <end position="310"/>
    </location>
</feature>
<feature type="region of interest" description="Involved in Mg(2+) ion dislocation from EF-Tu" evidence="1">
    <location>
        <begin position="80"/>
        <end position="83"/>
    </location>
</feature>
<proteinExistence type="inferred from homology"/>
<name>EFTS_BEII9</name>
<protein>
    <recommendedName>
        <fullName evidence="1">Elongation factor Ts</fullName>
        <shortName evidence="1">EF-Ts</shortName>
    </recommendedName>
</protein>
<evidence type="ECO:0000255" key="1">
    <source>
        <dbReference type="HAMAP-Rule" id="MF_00050"/>
    </source>
</evidence>
<keyword id="KW-0963">Cytoplasm</keyword>
<keyword id="KW-0251">Elongation factor</keyword>
<keyword id="KW-0648">Protein biosynthesis</keyword>
<keyword id="KW-1185">Reference proteome</keyword>
<reference key="1">
    <citation type="journal article" date="2010" name="J. Bacteriol.">
        <title>Complete genome sequence of Beijerinckia indica subsp. indica.</title>
        <authorList>
            <person name="Tamas I."/>
            <person name="Dedysh S.N."/>
            <person name="Liesack W."/>
            <person name="Stott M.B."/>
            <person name="Alam M."/>
            <person name="Murrell J.C."/>
            <person name="Dunfield P.F."/>
        </authorList>
    </citation>
    <scope>NUCLEOTIDE SEQUENCE [LARGE SCALE GENOMIC DNA]</scope>
    <source>
        <strain>ATCC 9039 / DSM 1715 / NCIMB 8712</strain>
    </source>
</reference>
<comment type="function">
    <text evidence="1">Associates with the EF-Tu.GDP complex and induces the exchange of GDP to GTP. It remains bound to the aminoacyl-tRNA.EF-Tu.GTP complex up to the GTP hydrolysis stage on the ribosome.</text>
</comment>
<comment type="subcellular location">
    <subcellularLocation>
        <location evidence="1">Cytoplasm</location>
    </subcellularLocation>
</comment>
<comment type="similarity">
    <text evidence="1">Belongs to the EF-Ts family.</text>
</comment>
<accession>B2IGT1</accession>
<dbReference type="EMBL" id="CP001016">
    <property type="protein sequence ID" value="ACB95842.1"/>
    <property type="molecule type" value="Genomic_DNA"/>
</dbReference>
<dbReference type="RefSeq" id="WP_012385197.1">
    <property type="nucleotide sequence ID" value="NC_010581.1"/>
</dbReference>
<dbReference type="SMR" id="B2IGT1"/>
<dbReference type="STRING" id="395963.Bind_2224"/>
<dbReference type="KEGG" id="bid:Bind_2224"/>
<dbReference type="eggNOG" id="COG0264">
    <property type="taxonomic scope" value="Bacteria"/>
</dbReference>
<dbReference type="HOGENOM" id="CLU_047155_2_0_5"/>
<dbReference type="OrthoDB" id="9808348at2"/>
<dbReference type="Proteomes" id="UP000001695">
    <property type="component" value="Chromosome"/>
</dbReference>
<dbReference type="GO" id="GO:0005737">
    <property type="term" value="C:cytoplasm"/>
    <property type="evidence" value="ECO:0007669"/>
    <property type="project" value="UniProtKB-SubCell"/>
</dbReference>
<dbReference type="GO" id="GO:0003746">
    <property type="term" value="F:translation elongation factor activity"/>
    <property type="evidence" value="ECO:0007669"/>
    <property type="project" value="UniProtKB-UniRule"/>
</dbReference>
<dbReference type="CDD" id="cd14275">
    <property type="entry name" value="UBA_EF-Ts"/>
    <property type="match status" value="1"/>
</dbReference>
<dbReference type="FunFam" id="1.10.8.10:FF:000001">
    <property type="entry name" value="Elongation factor Ts"/>
    <property type="match status" value="1"/>
</dbReference>
<dbReference type="Gene3D" id="1.10.286.20">
    <property type="match status" value="1"/>
</dbReference>
<dbReference type="Gene3D" id="1.10.8.10">
    <property type="entry name" value="DNA helicase RuvA subunit, C-terminal domain"/>
    <property type="match status" value="1"/>
</dbReference>
<dbReference type="Gene3D" id="3.30.479.20">
    <property type="entry name" value="Elongation factor Ts, dimerisation domain"/>
    <property type="match status" value="2"/>
</dbReference>
<dbReference type="HAMAP" id="MF_00050">
    <property type="entry name" value="EF_Ts"/>
    <property type="match status" value="1"/>
</dbReference>
<dbReference type="InterPro" id="IPR036402">
    <property type="entry name" value="EF-Ts_dimer_sf"/>
</dbReference>
<dbReference type="InterPro" id="IPR001816">
    <property type="entry name" value="Transl_elong_EFTs/EF1B"/>
</dbReference>
<dbReference type="InterPro" id="IPR014039">
    <property type="entry name" value="Transl_elong_EFTs/EF1B_dimer"/>
</dbReference>
<dbReference type="InterPro" id="IPR018101">
    <property type="entry name" value="Transl_elong_Ts_CS"/>
</dbReference>
<dbReference type="InterPro" id="IPR009060">
    <property type="entry name" value="UBA-like_sf"/>
</dbReference>
<dbReference type="NCBIfam" id="TIGR00116">
    <property type="entry name" value="tsf"/>
    <property type="match status" value="1"/>
</dbReference>
<dbReference type="PANTHER" id="PTHR11741">
    <property type="entry name" value="ELONGATION FACTOR TS"/>
    <property type="match status" value="1"/>
</dbReference>
<dbReference type="PANTHER" id="PTHR11741:SF0">
    <property type="entry name" value="ELONGATION FACTOR TS, MITOCHONDRIAL"/>
    <property type="match status" value="1"/>
</dbReference>
<dbReference type="Pfam" id="PF00889">
    <property type="entry name" value="EF_TS"/>
    <property type="match status" value="1"/>
</dbReference>
<dbReference type="SUPFAM" id="SSF54713">
    <property type="entry name" value="Elongation factor Ts (EF-Ts), dimerisation domain"/>
    <property type="match status" value="2"/>
</dbReference>
<dbReference type="SUPFAM" id="SSF46934">
    <property type="entry name" value="UBA-like"/>
    <property type="match status" value="1"/>
</dbReference>
<dbReference type="PROSITE" id="PS01126">
    <property type="entry name" value="EF_TS_1"/>
    <property type="match status" value="1"/>
</dbReference>
<dbReference type="PROSITE" id="PS01127">
    <property type="entry name" value="EF_TS_2"/>
    <property type="match status" value="1"/>
</dbReference>
<sequence>MANVTAAMVKELREKTGTGMMDCKNALNETGGDIEAAVDWLRKKGLSKAAKKAGRVAAEGLIALDVEGTSGVLVEVNSETDFVARNEDFQFLVRNIARVAIQQGLTDVEALKGAHYPAGGVLGDAISEAVAKIGENMTLRRAALIHVPTGAIGSYMHNSVTEGLGKIGVLVGLATEGNAEAVQPLAREIALHIAAAAPLAIDASGLDPAVVEREKAVLAEKNAGKPANVLEKIVESGLKSFYKETCLLDQVSNYPEHAGKTIGQVLKDTEKAAGAPVTLVAFYRYALGEGIEKQESDFAAEVAAAASGQA</sequence>
<organism>
    <name type="scientific">Beijerinckia indica subsp. indica (strain ATCC 9039 / DSM 1715 / NCIMB 8712)</name>
    <dbReference type="NCBI Taxonomy" id="395963"/>
    <lineage>
        <taxon>Bacteria</taxon>
        <taxon>Pseudomonadati</taxon>
        <taxon>Pseudomonadota</taxon>
        <taxon>Alphaproteobacteria</taxon>
        <taxon>Hyphomicrobiales</taxon>
        <taxon>Beijerinckiaceae</taxon>
        <taxon>Beijerinckia</taxon>
    </lineage>
</organism>